<dbReference type="EC" id="2.1.1.182" evidence="1"/>
<dbReference type="EMBL" id="CP000089">
    <property type="protein sequence ID" value="AAZ48385.1"/>
    <property type="molecule type" value="Genomic_DNA"/>
</dbReference>
<dbReference type="SMR" id="Q479U6"/>
<dbReference type="STRING" id="159087.Daro_3656"/>
<dbReference type="KEGG" id="dar:Daro_3656"/>
<dbReference type="eggNOG" id="COG0030">
    <property type="taxonomic scope" value="Bacteria"/>
</dbReference>
<dbReference type="HOGENOM" id="CLU_041220_0_1_4"/>
<dbReference type="OrthoDB" id="9814755at2"/>
<dbReference type="GO" id="GO:0005829">
    <property type="term" value="C:cytosol"/>
    <property type="evidence" value="ECO:0007669"/>
    <property type="project" value="TreeGrafter"/>
</dbReference>
<dbReference type="GO" id="GO:0052908">
    <property type="term" value="F:16S rRNA (adenine(1518)-N(6)/adenine(1519)-N(6))-dimethyltransferase activity"/>
    <property type="evidence" value="ECO:0007669"/>
    <property type="project" value="UniProtKB-EC"/>
</dbReference>
<dbReference type="GO" id="GO:0003723">
    <property type="term" value="F:RNA binding"/>
    <property type="evidence" value="ECO:0007669"/>
    <property type="project" value="UniProtKB-KW"/>
</dbReference>
<dbReference type="CDD" id="cd02440">
    <property type="entry name" value="AdoMet_MTases"/>
    <property type="match status" value="1"/>
</dbReference>
<dbReference type="FunFam" id="1.10.8.100:FF:000001">
    <property type="entry name" value="Ribosomal RNA small subunit methyltransferase A"/>
    <property type="match status" value="1"/>
</dbReference>
<dbReference type="Gene3D" id="1.10.8.100">
    <property type="entry name" value="Ribosomal RNA adenine dimethylase-like, domain 2"/>
    <property type="match status" value="1"/>
</dbReference>
<dbReference type="Gene3D" id="3.40.50.150">
    <property type="entry name" value="Vaccinia Virus protein VP39"/>
    <property type="match status" value="1"/>
</dbReference>
<dbReference type="HAMAP" id="MF_00607">
    <property type="entry name" value="16SrRNA_methyltr_A"/>
    <property type="match status" value="1"/>
</dbReference>
<dbReference type="InterPro" id="IPR001737">
    <property type="entry name" value="KsgA/Erm"/>
</dbReference>
<dbReference type="InterPro" id="IPR023165">
    <property type="entry name" value="rRNA_Ade_diMease-like_C"/>
</dbReference>
<dbReference type="InterPro" id="IPR020596">
    <property type="entry name" value="rRNA_Ade_Mease_Trfase_CS"/>
</dbReference>
<dbReference type="InterPro" id="IPR020598">
    <property type="entry name" value="rRNA_Ade_methylase_Trfase_N"/>
</dbReference>
<dbReference type="InterPro" id="IPR011530">
    <property type="entry name" value="rRNA_adenine_dimethylase"/>
</dbReference>
<dbReference type="InterPro" id="IPR029063">
    <property type="entry name" value="SAM-dependent_MTases_sf"/>
</dbReference>
<dbReference type="NCBIfam" id="TIGR00755">
    <property type="entry name" value="ksgA"/>
    <property type="match status" value="1"/>
</dbReference>
<dbReference type="PANTHER" id="PTHR11727">
    <property type="entry name" value="DIMETHYLADENOSINE TRANSFERASE"/>
    <property type="match status" value="1"/>
</dbReference>
<dbReference type="PANTHER" id="PTHR11727:SF7">
    <property type="entry name" value="DIMETHYLADENOSINE TRANSFERASE-RELATED"/>
    <property type="match status" value="1"/>
</dbReference>
<dbReference type="Pfam" id="PF00398">
    <property type="entry name" value="RrnaAD"/>
    <property type="match status" value="1"/>
</dbReference>
<dbReference type="SMART" id="SM00650">
    <property type="entry name" value="rADc"/>
    <property type="match status" value="1"/>
</dbReference>
<dbReference type="SUPFAM" id="SSF53335">
    <property type="entry name" value="S-adenosyl-L-methionine-dependent methyltransferases"/>
    <property type="match status" value="1"/>
</dbReference>
<dbReference type="PROSITE" id="PS01131">
    <property type="entry name" value="RRNA_A_DIMETH"/>
    <property type="match status" value="1"/>
</dbReference>
<dbReference type="PROSITE" id="PS51689">
    <property type="entry name" value="SAM_RNA_A_N6_MT"/>
    <property type="match status" value="1"/>
</dbReference>
<gene>
    <name evidence="1" type="primary">rsmA</name>
    <name evidence="1" type="synonym">ksgA</name>
    <name type="ordered locus">Daro_3656</name>
</gene>
<organism>
    <name type="scientific">Dechloromonas aromatica (strain RCB)</name>
    <dbReference type="NCBI Taxonomy" id="159087"/>
    <lineage>
        <taxon>Bacteria</taxon>
        <taxon>Pseudomonadati</taxon>
        <taxon>Pseudomonadota</taxon>
        <taxon>Betaproteobacteria</taxon>
        <taxon>Rhodocyclales</taxon>
        <taxon>Azonexaceae</taxon>
        <taxon>Dechloromonas</taxon>
    </lineage>
</organism>
<proteinExistence type="inferred from homology"/>
<protein>
    <recommendedName>
        <fullName evidence="1">Ribosomal RNA small subunit methyltransferase A</fullName>
        <ecNumber evidence="1">2.1.1.182</ecNumber>
    </recommendedName>
    <alternativeName>
        <fullName evidence="1">16S rRNA (adenine(1518)-N(6)/adenine(1519)-N(6))-dimethyltransferase</fullName>
    </alternativeName>
    <alternativeName>
        <fullName evidence="1">16S rRNA dimethyladenosine transferase</fullName>
    </alternativeName>
    <alternativeName>
        <fullName evidence="1">16S rRNA dimethylase</fullName>
    </alternativeName>
    <alternativeName>
        <fullName evidence="1">S-adenosylmethionine-6-N', N'-adenosyl(rRNA) dimethyltransferase</fullName>
    </alternativeName>
</protein>
<evidence type="ECO:0000255" key="1">
    <source>
        <dbReference type="HAMAP-Rule" id="MF_00607"/>
    </source>
</evidence>
<name>RSMA_DECAR</name>
<reference key="1">
    <citation type="journal article" date="2009" name="BMC Genomics">
        <title>Metabolic analysis of the soil microbe Dechloromonas aromatica str. RCB: indications of a surprisingly complex life-style and cryptic anaerobic pathways for aromatic degradation.</title>
        <authorList>
            <person name="Salinero K.K."/>
            <person name="Keller K."/>
            <person name="Feil W.S."/>
            <person name="Feil H."/>
            <person name="Trong S."/>
            <person name="Di Bartolo G."/>
            <person name="Lapidus A."/>
        </authorList>
    </citation>
    <scope>NUCLEOTIDE SEQUENCE [LARGE SCALE GENOMIC DNA]</scope>
    <source>
        <strain>RCB</strain>
    </source>
</reference>
<accession>Q479U6</accession>
<keyword id="KW-0963">Cytoplasm</keyword>
<keyword id="KW-0489">Methyltransferase</keyword>
<keyword id="KW-0694">RNA-binding</keyword>
<keyword id="KW-0698">rRNA processing</keyword>
<keyword id="KW-0949">S-adenosyl-L-methionine</keyword>
<keyword id="KW-0808">Transferase</keyword>
<sequence>MKGHVARKRFGQNFLVDQGIIAAIISAVDPKRDETVVEIGPGLGAITEPLMARVDHLHVIEIDRDLIARLKKQHTPERMTVHEGDALAFDFASIGKNLRLVGNLPYNISTPLLFHLAEYVDVVHDMHFMLQKEVVERMVAEPGNADFGRMSVMLQYRFYLEWLIDVPPESFDPPPKVQSAVVRLIPKPVSELNAKSQEKLSQVALTAFSQRRKMLRNTMKTLLSDAAFTELGIDPTCRPEDVSVEDYVRIANYLS</sequence>
<feature type="chain" id="PRO_0000257280" description="Ribosomal RNA small subunit methyltransferase A">
    <location>
        <begin position="1"/>
        <end position="255"/>
    </location>
</feature>
<feature type="binding site" evidence="1">
    <location>
        <position position="13"/>
    </location>
    <ligand>
        <name>S-adenosyl-L-methionine</name>
        <dbReference type="ChEBI" id="CHEBI:59789"/>
    </ligand>
</feature>
<feature type="binding site" evidence="1">
    <location>
        <position position="15"/>
    </location>
    <ligand>
        <name>S-adenosyl-L-methionine</name>
        <dbReference type="ChEBI" id="CHEBI:59789"/>
    </ligand>
</feature>
<feature type="binding site" evidence="1">
    <location>
        <position position="40"/>
    </location>
    <ligand>
        <name>S-adenosyl-L-methionine</name>
        <dbReference type="ChEBI" id="CHEBI:59789"/>
    </ligand>
</feature>
<feature type="binding site" evidence="1">
    <location>
        <position position="61"/>
    </location>
    <ligand>
        <name>S-adenosyl-L-methionine</name>
        <dbReference type="ChEBI" id="CHEBI:59789"/>
    </ligand>
</feature>
<feature type="binding site" evidence="1">
    <location>
        <position position="85"/>
    </location>
    <ligand>
        <name>S-adenosyl-L-methionine</name>
        <dbReference type="ChEBI" id="CHEBI:59789"/>
    </ligand>
</feature>
<feature type="binding site" evidence="1">
    <location>
        <position position="103"/>
    </location>
    <ligand>
        <name>S-adenosyl-L-methionine</name>
        <dbReference type="ChEBI" id="CHEBI:59789"/>
    </ligand>
</feature>
<comment type="function">
    <text evidence="1">Specifically dimethylates two adjacent adenosines (A1518 and A1519) in the loop of a conserved hairpin near the 3'-end of 16S rRNA in the 30S particle. May play a critical role in biogenesis of 30S subunits.</text>
</comment>
<comment type="catalytic activity">
    <reaction evidence="1">
        <text>adenosine(1518)/adenosine(1519) in 16S rRNA + 4 S-adenosyl-L-methionine = N(6)-dimethyladenosine(1518)/N(6)-dimethyladenosine(1519) in 16S rRNA + 4 S-adenosyl-L-homocysteine + 4 H(+)</text>
        <dbReference type="Rhea" id="RHEA:19609"/>
        <dbReference type="Rhea" id="RHEA-COMP:10232"/>
        <dbReference type="Rhea" id="RHEA-COMP:10233"/>
        <dbReference type="ChEBI" id="CHEBI:15378"/>
        <dbReference type="ChEBI" id="CHEBI:57856"/>
        <dbReference type="ChEBI" id="CHEBI:59789"/>
        <dbReference type="ChEBI" id="CHEBI:74411"/>
        <dbReference type="ChEBI" id="CHEBI:74493"/>
        <dbReference type="EC" id="2.1.1.182"/>
    </reaction>
</comment>
<comment type="subcellular location">
    <subcellularLocation>
        <location evidence="1">Cytoplasm</location>
    </subcellularLocation>
</comment>
<comment type="similarity">
    <text evidence="1">Belongs to the class I-like SAM-binding methyltransferase superfamily. rRNA adenine N(6)-methyltransferase family. RsmA subfamily.</text>
</comment>